<comment type="function">
    <text evidence="1">Catalyzes the transfer of the gamma-phosphate of ATP to D-galactose to form alpha-D-galactose-1-phosphate (Gal-1-P).</text>
</comment>
<comment type="catalytic activity">
    <reaction>
        <text>alpha-D-galactose + ATP = alpha-D-galactose 1-phosphate + ADP + H(+)</text>
        <dbReference type="Rhea" id="RHEA:13553"/>
        <dbReference type="ChEBI" id="CHEBI:15378"/>
        <dbReference type="ChEBI" id="CHEBI:28061"/>
        <dbReference type="ChEBI" id="CHEBI:30616"/>
        <dbReference type="ChEBI" id="CHEBI:58336"/>
        <dbReference type="ChEBI" id="CHEBI:456216"/>
        <dbReference type="EC" id="2.7.1.6"/>
    </reaction>
</comment>
<comment type="pathway">
    <text>Carbohydrate metabolism; galactose metabolism.</text>
</comment>
<comment type="subcellular location">
    <subcellularLocation>
        <location evidence="2">Cytoplasm</location>
    </subcellularLocation>
</comment>
<comment type="similarity">
    <text evidence="2">Belongs to the GHMP kinase family. GalK subfamily.</text>
</comment>
<dbReference type="EC" id="2.7.1.6"/>
<dbReference type="EMBL" id="AE000520">
    <property type="protein sequence ID" value="AAC65405.1"/>
    <property type="molecule type" value="Genomic_DNA"/>
</dbReference>
<dbReference type="PIR" id="H71327">
    <property type="entry name" value="H71327"/>
</dbReference>
<dbReference type="SMR" id="O83433"/>
<dbReference type="IntAct" id="O83433">
    <property type="interactions" value="9"/>
</dbReference>
<dbReference type="STRING" id="243276.TP_0418"/>
<dbReference type="EnsemblBacteria" id="AAC65405">
    <property type="protein sequence ID" value="AAC65405"/>
    <property type="gene ID" value="TP_0418"/>
</dbReference>
<dbReference type="KEGG" id="tpa:TP_0418"/>
<dbReference type="KEGG" id="tpw:TPANIC_0418"/>
<dbReference type="eggNOG" id="COG0153">
    <property type="taxonomic scope" value="Bacteria"/>
</dbReference>
<dbReference type="HOGENOM" id="CLU_017814_2_1_12"/>
<dbReference type="OrthoDB" id="250531at2"/>
<dbReference type="UniPathway" id="UPA00214"/>
<dbReference type="Proteomes" id="UP000000811">
    <property type="component" value="Chromosome"/>
</dbReference>
<dbReference type="GO" id="GO:0005829">
    <property type="term" value="C:cytosol"/>
    <property type="evidence" value="ECO:0007669"/>
    <property type="project" value="TreeGrafter"/>
</dbReference>
<dbReference type="GO" id="GO:0005524">
    <property type="term" value="F:ATP binding"/>
    <property type="evidence" value="ECO:0007669"/>
    <property type="project" value="UniProtKB-KW"/>
</dbReference>
<dbReference type="GO" id="GO:0004335">
    <property type="term" value="F:galactokinase activity"/>
    <property type="evidence" value="ECO:0007669"/>
    <property type="project" value="UniProtKB-EC"/>
</dbReference>
<dbReference type="GO" id="GO:0046872">
    <property type="term" value="F:metal ion binding"/>
    <property type="evidence" value="ECO:0007669"/>
    <property type="project" value="UniProtKB-KW"/>
</dbReference>
<dbReference type="GO" id="GO:0006012">
    <property type="term" value="P:galactose metabolic process"/>
    <property type="evidence" value="ECO:0007669"/>
    <property type="project" value="UniProtKB-UniPathway"/>
</dbReference>
<dbReference type="Gene3D" id="3.30.230.10">
    <property type="match status" value="1"/>
</dbReference>
<dbReference type="Gene3D" id="3.30.70.890">
    <property type="entry name" value="GHMP kinase, C-terminal domain"/>
    <property type="match status" value="1"/>
</dbReference>
<dbReference type="InterPro" id="IPR019539">
    <property type="entry name" value="GalKase_N"/>
</dbReference>
<dbReference type="InterPro" id="IPR013750">
    <property type="entry name" value="GHMP_kinase_C_dom"/>
</dbReference>
<dbReference type="InterPro" id="IPR036554">
    <property type="entry name" value="GHMP_kinase_C_sf"/>
</dbReference>
<dbReference type="InterPro" id="IPR006204">
    <property type="entry name" value="GHMP_kinase_N_dom"/>
</dbReference>
<dbReference type="InterPro" id="IPR006206">
    <property type="entry name" value="Mevalonate/galactokinase"/>
</dbReference>
<dbReference type="InterPro" id="IPR020568">
    <property type="entry name" value="Ribosomal_Su5_D2-typ_SF"/>
</dbReference>
<dbReference type="InterPro" id="IPR014721">
    <property type="entry name" value="Ribsml_uS5_D2-typ_fold_subgr"/>
</dbReference>
<dbReference type="PANTHER" id="PTHR10457:SF7">
    <property type="entry name" value="GALACTOKINASE-RELATED"/>
    <property type="match status" value="1"/>
</dbReference>
<dbReference type="PANTHER" id="PTHR10457">
    <property type="entry name" value="MEVALONATE KINASE/GALACTOKINASE"/>
    <property type="match status" value="1"/>
</dbReference>
<dbReference type="Pfam" id="PF10509">
    <property type="entry name" value="GalKase_gal_bdg"/>
    <property type="match status" value="1"/>
</dbReference>
<dbReference type="Pfam" id="PF08544">
    <property type="entry name" value="GHMP_kinases_C"/>
    <property type="match status" value="1"/>
</dbReference>
<dbReference type="Pfam" id="PF00288">
    <property type="entry name" value="GHMP_kinases_N"/>
    <property type="match status" value="1"/>
</dbReference>
<dbReference type="PIRSF" id="PIRSF000530">
    <property type="entry name" value="Galactokinase"/>
    <property type="match status" value="1"/>
</dbReference>
<dbReference type="PRINTS" id="PR00959">
    <property type="entry name" value="MEVGALKINASE"/>
</dbReference>
<dbReference type="SUPFAM" id="SSF55060">
    <property type="entry name" value="GHMP Kinase, C-terminal domain"/>
    <property type="match status" value="1"/>
</dbReference>
<dbReference type="SUPFAM" id="SSF54211">
    <property type="entry name" value="Ribosomal protein S5 domain 2-like"/>
    <property type="match status" value="1"/>
</dbReference>
<proteinExistence type="inferred from homology"/>
<evidence type="ECO:0000250" key="1"/>
<evidence type="ECO:0000305" key="2"/>
<accession>O83433</accession>
<sequence>MLYYFNTLAMMLRMQRVESCHTEEYGDEPEAIAVVPGRFHLLGEYLWFAQGNTLSMAIDQTLTLCVSRRKDSTFRLFSLTLGERRKISTANLRYRKEDRWANSVKAVILSFMDGGYHLTGLNCTILSQIPPDAGLGTPNALKVAMALVLGRLFAATLPKESVVSIVEHANERYLKTHAHRADILCVLFAKQGSCVRTDHRKKQAELCQFPSEGKRIVLTDSRVPRFIAREEFTARLKRCVDAYELVKRNPDMPRAMSKLMAAALEEIDVPEGIRRRVISLVRESLGVDEAIEALRKRDFAAFSRVVNRSHERLRDRFEISCPELDWLVKRALEFVDPDAPDVVCSRLTGRGFGGCTYAILRDQDFEPYLERLDEYERIFGFKAAAYEVQCSEGARVL</sequence>
<organism>
    <name type="scientific">Treponema pallidum (strain Nichols)</name>
    <dbReference type="NCBI Taxonomy" id="243276"/>
    <lineage>
        <taxon>Bacteria</taxon>
        <taxon>Pseudomonadati</taxon>
        <taxon>Spirochaetota</taxon>
        <taxon>Spirochaetia</taxon>
        <taxon>Spirochaetales</taxon>
        <taxon>Treponemataceae</taxon>
        <taxon>Treponema</taxon>
    </lineage>
</organism>
<feature type="chain" id="PRO_0000184634" description="Putative galactokinase">
    <location>
        <begin position="1"/>
        <end position="397"/>
    </location>
</feature>
<feature type="active site" description="Proton acceptor" evidence="1">
    <location>
        <position position="182"/>
    </location>
</feature>
<feature type="binding site" evidence="1">
    <location>
        <position position="78"/>
    </location>
    <ligand>
        <name>ATP</name>
        <dbReference type="ChEBI" id="CHEBI:30616"/>
    </ligand>
</feature>
<feature type="site" description="Transition state stabilizer" evidence="1">
    <location>
        <position position="38"/>
    </location>
</feature>
<keyword id="KW-0067">ATP-binding</keyword>
<keyword id="KW-0119">Carbohydrate metabolism</keyword>
<keyword id="KW-0963">Cytoplasm</keyword>
<keyword id="KW-0299">Galactose metabolism</keyword>
<keyword id="KW-0418">Kinase</keyword>
<keyword id="KW-0460">Magnesium</keyword>
<keyword id="KW-0479">Metal-binding</keyword>
<keyword id="KW-0547">Nucleotide-binding</keyword>
<keyword id="KW-1185">Reference proteome</keyword>
<keyword id="KW-0808">Transferase</keyword>
<name>GAL1_TREPA</name>
<reference key="1">
    <citation type="journal article" date="1998" name="Science">
        <title>Complete genome sequence of Treponema pallidum, the syphilis spirochete.</title>
        <authorList>
            <person name="Fraser C.M."/>
            <person name="Norris S.J."/>
            <person name="Weinstock G.M."/>
            <person name="White O."/>
            <person name="Sutton G.G."/>
            <person name="Dodson R.J."/>
            <person name="Gwinn M.L."/>
            <person name="Hickey E.K."/>
            <person name="Clayton R.A."/>
            <person name="Ketchum K.A."/>
            <person name="Sodergren E."/>
            <person name="Hardham J.M."/>
            <person name="McLeod M.P."/>
            <person name="Salzberg S.L."/>
            <person name="Peterson J.D."/>
            <person name="Khalak H.G."/>
            <person name="Richardson D.L."/>
            <person name="Howell J.K."/>
            <person name="Chidambaram M."/>
            <person name="Utterback T.R."/>
            <person name="McDonald L.A."/>
            <person name="Artiach P."/>
            <person name="Bowman C."/>
            <person name="Cotton M.D."/>
            <person name="Fujii C."/>
            <person name="Garland S.A."/>
            <person name="Hatch B."/>
            <person name="Horst K."/>
            <person name="Roberts K.M."/>
            <person name="Sandusky M."/>
            <person name="Weidman J.F."/>
            <person name="Smith H.O."/>
            <person name="Venter J.C."/>
        </authorList>
    </citation>
    <scope>NUCLEOTIDE SEQUENCE [LARGE SCALE GENOMIC DNA]</scope>
    <source>
        <strain>Nichols</strain>
    </source>
</reference>
<protein>
    <recommendedName>
        <fullName>Putative galactokinase</fullName>
        <ecNumber>2.7.1.6</ecNumber>
    </recommendedName>
    <alternativeName>
        <fullName>Galactose kinase</fullName>
    </alternativeName>
</protein>
<gene>
    <name type="primary">galK</name>
    <name type="ordered locus">TP_0418</name>
</gene>